<keyword id="KW-0903">Direct protein sequencing</keyword>
<keyword id="KW-1015">Disulfide bond</keyword>
<keyword id="KW-0166">Nematocyst</keyword>
<keyword id="KW-0646">Protease inhibitor</keyword>
<keyword id="KW-0964">Secreted</keyword>
<keyword id="KW-0722">Serine protease inhibitor</keyword>
<sequence length="56" mass="5995">VPANCLLPMKVGPCRARVPRFYYNSSSGKCEGFTYGGCGANANKFQTKAQCEKACA</sequence>
<evidence type="ECO:0000250" key="1"/>
<evidence type="ECO:0000255" key="2">
    <source>
        <dbReference type="PROSITE-ProRule" id="PRU00031"/>
    </source>
</evidence>
<evidence type="ECO:0000269" key="3">
    <source>
    </source>
</evidence>
<evidence type="ECO:0000303" key="4">
    <source>
    </source>
</evidence>
<evidence type="ECO:0000303" key="5">
    <source>
    </source>
</evidence>
<evidence type="ECO:0000305" key="6"/>
<evidence type="ECO:0000305" key="7">
    <source>
    </source>
</evidence>
<proteinExistence type="evidence at protein level"/>
<protein>
    <recommendedName>
        <fullName evidence="5">PI-actitoxin-Afv2b</fullName>
        <shortName evidence="5">PI-AITX-Afv2b</shortName>
    </recommendedName>
    <alternativeName>
        <fullName evidence="4">Kunitz-type protease inhibitor AFAPI-III</fullName>
    </alternativeName>
</protein>
<reference key="1">
    <citation type="journal article" date="2008" name="Comp. Biochem. Physiol.">
        <title>Kunitz-type protease inhibitors from acrorhagi of three species of sea anemones.</title>
        <authorList>
            <person name="Minagawa S."/>
            <person name="Sugiyama M."/>
            <person name="Ishida M."/>
            <person name="Nagashima Y."/>
            <person name="Shiomi K."/>
        </authorList>
    </citation>
    <scope>PROTEIN SEQUENCE</scope>
    <scope>FUNCTION</scope>
    <scope>TISSUE SPECIFICITY</scope>
    <source>
        <tissue>Tentacle</tissue>
    </source>
</reference>
<reference key="2">
    <citation type="journal article" date="2012" name="Toxicon">
        <title>Development of a rational nomenclature for naming peptide and protein toxins from sea anemones.</title>
        <authorList>
            <person name="Oliveira J.S."/>
            <person name="Fuentes-Silva D."/>
            <person name="King G.F."/>
        </authorList>
    </citation>
    <scope>NOMENCLATURE</scope>
</reference>
<dbReference type="SMR" id="P0DMJ4"/>
<dbReference type="GO" id="GO:0005615">
    <property type="term" value="C:extracellular space"/>
    <property type="evidence" value="ECO:0007669"/>
    <property type="project" value="TreeGrafter"/>
</dbReference>
<dbReference type="GO" id="GO:0042151">
    <property type="term" value="C:nematocyst"/>
    <property type="evidence" value="ECO:0007669"/>
    <property type="project" value="UniProtKB-SubCell"/>
</dbReference>
<dbReference type="GO" id="GO:0004867">
    <property type="term" value="F:serine-type endopeptidase inhibitor activity"/>
    <property type="evidence" value="ECO:0007669"/>
    <property type="project" value="UniProtKB-KW"/>
</dbReference>
<dbReference type="CDD" id="cd00109">
    <property type="entry name" value="Kunitz-type"/>
    <property type="match status" value="1"/>
</dbReference>
<dbReference type="FunFam" id="4.10.410.10:FF:000021">
    <property type="entry name" value="Serine protease inhibitor, putative"/>
    <property type="match status" value="1"/>
</dbReference>
<dbReference type="Gene3D" id="4.10.410.10">
    <property type="entry name" value="Pancreatic trypsin inhibitor Kunitz domain"/>
    <property type="match status" value="1"/>
</dbReference>
<dbReference type="InterPro" id="IPR002223">
    <property type="entry name" value="Kunitz_BPTI"/>
</dbReference>
<dbReference type="InterPro" id="IPR036880">
    <property type="entry name" value="Kunitz_BPTI_sf"/>
</dbReference>
<dbReference type="InterPro" id="IPR020901">
    <property type="entry name" value="Prtase_inh_Kunz-CS"/>
</dbReference>
<dbReference type="InterPro" id="IPR050098">
    <property type="entry name" value="TFPI/VKTCI-like"/>
</dbReference>
<dbReference type="PANTHER" id="PTHR10083:SF374">
    <property type="entry name" value="BPTI_KUNITZ INHIBITOR DOMAIN-CONTAINING PROTEIN"/>
    <property type="match status" value="1"/>
</dbReference>
<dbReference type="PANTHER" id="PTHR10083">
    <property type="entry name" value="KUNITZ-TYPE PROTEASE INHIBITOR-RELATED"/>
    <property type="match status" value="1"/>
</dbReference>
<dbReference type="Pfam" id="PF00014">
    <property type="entry name" value="Kunitz_BPTI"/>
    <property type="match status" value="1"/>
</dbReference>
<dbReference type="PRINTS" id="PR00759">
    <property type="entry name" value="BASICPTASE"/>
</dbReference>
<dbReference type="SMART" id="SM00131">
    <property type="entry name" value="KU"/>
    <property type="match status" value="1"/>
</dbReference>
<dbReference type="SUPFAM" id="SSF57362">
    <property type="entry name" value="BPTI-like"/>
    <property type="match status" value="1"/>
</dbReference>
<dbReference type="PROSITE" id="PS00280">
    <property type="entry name" value="BPTI_KUNITZ_1"/>
    <property type="match status" value="1"/>
</dbReference>
<dbReference type="PROSITE" id="PS50279">
    <property type="entry name" value="BPTI_KUNITZ_2"/>
    <property type="match status" value="1"/>
</dbReference>
<organism>
    <name type="scientific">Anthopleura fuscoviridis</name>
    <name type="common">Sea anemone</name>
    <dbReference type="NCBI Taxonomy" id="6111"/>
    <lineage>
        <taxon>Eukaryota</taxon>
        <taxon>Metazoa</taxon>
        <taxon>Cnidaria</taxon>
        <taxon>Anthozoa</taxon>
        <taxon>Hexacorallia</taxon>
        <taxon>Actiniaria</taxon>
        <taxon>Actiniidae</taxon>
        <taxon>Anthopleura</taxon>
    </lineage>
</organism>
<name>VKTI3_ANTFU</name>
<feature type="chain" id="PRO_0000429351" description="PI-actitoxin-Afv2b" evidence="3">
    <location>
        <begin position="1"/>
        <end position="56"/>
    </location>
</feature>
<feature type="domain" description="BPTI/Kunitz inhibitor" evidence="2">
    <location>
        <begin position="5"/>
        <end position="55"/>
    </location>
</feature>
<feature type="site" description="Reactive bond for trypsin" evidence="1">
    <location>
        <begin position="15"/>
        <end position="16"/>
    </location>
</feature>
<feature type="disulfide bond" evidence="2">
    <location>
        <begin position="5"/>
        <end position="55"/>
    </location>
</feature>
<feature type="disulfide bond" evidence="2">
    <location>
        <begin position="14"/>
        <end position="38"/>
    </location>
</feature>
<feature type="disulfide bond" evidence="2">
    <location>
        <begin position="30"/>
        <end position="51"/>
    </location>
</feature>
<comment type="function">
    <text evidence="3">Serine protease inhibitor that is strongly active against trypsin (900 IU/mg) and moderately active against plasmin.</text>
</comment>
<comment type="subcellular location">
    <subcellularLocation>
        <location evidence="6">Secreted</location>
    </subcellularLocation>
    <subcellularLocation>
        <location evidence="6">Nematocyst</location>
    </subcellularLocation>
</comment>
<comment type="tissue specificity">
    <text evidence="3">Expressed by acrorhagi.</text>
</comment>
<comment type="miscellaneous">
    <text evidence="7">Does not inhibit potassium channels (Kv), as well as metalloproteases, and cysteine proteases (papain and bromelain).</text>
</comment>
<comment type="similarity">
    <text evidence="6">Belongs to the venom Kunitz-type family. Sea anemone type 2 potassium channel toxin subfamily.</text>
</comment>
<accession>P0DMJ4</accession>